<evidence type="ECO:0000255" key="1">
    <source>
        <dbReference type="HAMAP-Rule" id="MF_00719"/>
    </source>
</evidence>
<keyword id="KW-0997">Cell inner membrane</keyword>
<keyword id="KW-1003">Cell membrane</keyword>
<keyword id="KW-0169">Cobalamin biosynthesis</keyword>
<keyword id="KW-0460">Magnesium</keyword>
<keyword id="KW-0472">Membrane</keyword>
<keyword id="KW-0808">Transferase</keyword>
<keyword id="KW-0812">Transmembrane</keyword>
<keyword id="KW-1133">Transmembrane helix</keyword>
<accession>Q1MFK3</accession>
<proteinExistence type="inferred from homology"/>
<protein>
    <recommendedName>
        <fullName evidence="1">Adenosylcobinamide-GDP ribazoletransferase</fullName>
        <ecNumber evidence="1">2.7.8.26</ecNumber>
    </recommendedName>
    <alternativeName>
        <fullName evidence="1">Cobalamin synthase</fullName>
    </alternativeName>
    <alternativeName>
        <fullName evidence="1">Cobalamin-5'-phosphate synthase</fullName>
    </alternativeName>
</protein>
<name>COBS_RHIJ3</name>
<organism>
    <name type="scientific">Rhizobium johnstonii (strain DSM 114642 / LMG 32736 / 3841)</name>
    <name type="common">Rhizobium leguminosarum bv. viciae</name>
    <dbReference type="NCBI Taxonomy" id="216596"/>
    <lineage>
        <taxon>Bacteria</taxon>
        <taxon>Pseudomonadati</taxon>
        <taxon>Pseudomonadota</taxon>
        <taxon>Alphaproteobacteria</taxon>
        <taxon>Hyphomicrobiales</taxon>
        <taxon>Rhizobiaceae</taxon>
        <taxon>Rhizobium/Agrobacterium group</taxon>
        <taxon>Rhizobium</taxon>
        <taxon>Rhizobium johnstonii</taxon>
    </lineage>
</organism>
<reference key="1">
    <citation type="journal article" date="2006" name="Genome Biol.">
        <title>The genome of Rhizobium leguminosarum has recognizable core and accessory components.</title>
        <authorList>
            <person name="Young J.P.W."/>
            <person name="Crossman L.C."/>
            <person name="Johnston A.W.B."/>
            <person name="Thomson N.R."/>
            <person name="Ghazoui Z.F."/>
            <person name="Hull K.H."/>
            <person name="Wexler M."/>
            <person name="Curson A.R.J."/>
            <person name="Todd J.D."/>
            <person name="Poole P.S."/>
            <person name="Mauchline T.H."/>
            <person name="East A.K."/>
            <person name="Quail M.A."/>
            <person name="Churcher C."/>
            <person name="Arrowsmith C."/>
            <person name="Cherevach I."/>
            <person name="Chillingworth T."/>
            <person name="Clarke K."/>
            <person name="Cronin A."/>
            <person name="Davis P."/>
            <person name="Fraser A."/>
            <person name="Hance Z."/>
            <person name="Hauser H."/>
            <person name="Jagels K."/>
            <person name="Moule S."/>
            <person name="Mungall K."/>
            <person name="Norbertczak H."/>
            <person name="Rabbinowitsch E."/>
            <person name="Sanders M."/>
            <person name="Simmonds M."/>
            <person name="Whitehead S."/>
            <person name="Parkhill J."/>
        </authorList>
    </citation>
    <scope>NUCLEOTIDE SEQUENCE [LARGE SCALE GENOMIC DNA]</scope>
    <source>
        <strain>DSM 114642 / LMG 32736 / 3841</strain>
    </source>
</reference>
<feature type="chain" id="PRO_1000045798" description="Adenosylcobinamide-GDP ribazoletransferase">
    <location>
        <begin position="1"/>
        <end position="260"/>
    </location>
</feature>
<feature type="transmembrane region" description="Helical" evidence="1">
    <location>
        <begin position="40"/>
        <end position="60"/>
    </location>
</feature>
<feature type="transmembrane region" description="Helical" evidence="1">
    <location>
        <begin position="64"/>
        <end position="84"/>
    </location>
</feature>
<feature type="transmembrane region" description="Helical" evidence="1">
    <location>
        <begin position="117"/>
        <end position="137"/>
    </location>
</feature>
<feature type="transmembrane region" description="Helical" evidence="1">
    <location>
        <begin position="142"/>
        <end position="162"/>
    </location>
</feature>
<feature type="transmembrane region" description="Helical" evidence="1">
    <location>
        <begin position="188"/>
        <end position="208"/>
    </location>
</feature>
<feature type="transmembrane region" description="Helical" evidence="1">
    <location>
        <begin position="209"/>
        <end position="229"/>
    </location>
</feature>
<comment type="function">
    <text evidence="1">Joins adenosylcobinamide-GDP and alpha-ribazole to generate adenosylcobalamin (Ado-cobalamin). Also synthesizes adenosylcobalamin 5'-phosphate from adenosylcobinamide-GDP and alpha-ribazole 5'-phosphate.</text>
</comment>
<comment type="catalytic activity">
    <reaction evidence="1">
        <text>alpha-ribazole + adenosylcob(III)inamide-GDP = adenosylcob(III)alamin + GMP + H(+)</text>
        <dbReference type="Rhea" id="RHEA:16049"/>
        <dbReference type="ChEBI" id="CHEBI:10329"/>
        <dbReference type="ChEBI" id="CHEBI:15378"/>
        <dbReference type="ChEBI" id="CHEBI:18408"/>
        <dbReference type="ChEBI" id="CHEBI:58115"/>
        <dbReference type="ChEBI" id="CHEBI:60487"/>
        <dbReference type="EC" id="2.7.8.26"/>
    </reaction>
</comment>
<comment type="catalytic activity">
    <reaction evidence="1">
        <text>alpha-ribazole 5'-phosphate + adenosylcob(III)inamide-GDP = adenosylcob(III)alamin 5'-phosphate + GMP + H(+)</text>
        <dbReference type="Rhea" id="RHEA:23560"/>
        <dbReference type="ChEBI" id="CHEBI:15378"/>
        <dbReference type="ChEBI" id="CHEBI:57918"/>
        <dbReference type="ChEBI" id="CHEBI:58115"/>
        <dbReference type="ChEBI" id="CHEBI:60487"/>
        <dbReference type="ChEBI" id="CHEBI:60493"/>
        <dbReference type="EC" id="2.7.8.26"/>
    </reaction>
</comment>
<comment type="cofactor">
    <cofactor evidence="1">
        <name>Mg(2+)</name>
        <dbReference type="ChEBI" id="CHEBI:18420"/>
    </cofactor>
</comment>
<comment type="pathway">
    <text evidence="1">Cofactor biosynthesis; adenosylcobalamin biosynthesis; adenosylcobalamin from cob(II)yrinate a,c-diamide: step 7/7.</text>
</comment>
<comment type="subcellular location">
    <subcellularLocation>
        <location evidence="1">Cell inner membrane</location>
        <topology evidence="1">Multi-pass membrane protein</topology>
    </subcellularLocation>
</comment>
<comment type="similarity">
    <text evidence="1">Belongs to the CobS family.</text>
</comment>
<dbReference type="EC" id="2.7.8.26" evidence="1"/>
<dbReference type="EMBL" id="AM236080">
    <property type="protein sequence ID" value="CAK08271.1"/>
    <property type="molecule type" value="Genomic_DNA"/>
</dbReference>
<dbReference type="RefSeq" id="WP_011652312.1">
    <property type="nucleotide sequence ID" value="NC_008380.1"/>
</dbReference>
<dbReference type="EnsemblBacteria" id="CAK08271">
    <property type="protein sequence ID" value="CAK08271"/>
    <property type="gene ID" value="RL2781A"/>
</dbReference>
<dbReference type="KEGG" id="rle:RL2781A"/>
<dbReference type="eggNOG" id="COG0368">
    <property type="taxonomic scope" value="Bacteria"/>
</dbReference>
<dbReference type="HOGENOM" id="CLU_057426_1_0_5"/>
<dbReference type="UniPathway" id="UPA00148">
    <property type="reaction ID" value="UER00238"/>
</dbReference>
<dbReference type="Proteomes" id="UP000006575">
    <property type="component" value="Chromosome"/>
</dbReference>
<dbReference type="GO" id="GO:0005886">
    <property type="term" value="C:plasma membrane"/>
    <property type="evidence" value="ECO:0007669"/>
    <property type="project" value="UniProtKB-SubCell"/>
</dbReference>
<dbReference type="GO" id="GO:0051073">
    <property type="term" value="F:adenosylcobinamide-GDP ribazoletransferase activity"/>
    <property type="evidence" value="ECO:0007669"/>
    <property type="project" value="UniProtKB-UniRule"/>
</dbReference>
<dbReference type="GO" id="GO:0008818">
    <property type="term" value="F:cobalamin 5'-phosphate synthase activity"/>
    <property type="evidence" value="ECO:0007669"/>
    <property type="project" value="UniProtKB-UniRule"/>
</dbReference>
<dbReference type="GO" id="GO:0009236">
    <property type="term" value="P:cobalamin biosynthetic process"/>
    <property type="evidence" value="ECO:0007669"/>
    <property type="project" value="UniProtKB-UniRule"/>
</dbReference>
<dbReference type="HAMAP" id="MF_00719">
    <property type="entry name" value="CobS"/>
    <property type="match status" value="1"/>
</dbReference>
<dbReference type="InterPro" id="IPR003805">
    <property type="entry name" value="CobS"/>
</dbReference>
<dbReference type="NCBIfam" id="TIGR00317">
    <property type="entry name" value="cobS"/>
    <property type="match status" value="1"/>
</dbReference>
<dbReference type="NCBIfam" id="NF001276">
    <property type="entry name" value="PRK00235.1-2"/>
    <property type="match status" value="1"/>
</dbReference>
<dbReference type="PANTHER" id="PTHR34148">
    <property type="entry name" value="ADENOSYLCOBINAMIDE-GDP RIBAZOLETRANSFERASE"/>
    <property type="match status" value="1"/>
</dbReference>
<dbReference type="PANTHER" id="PTHR34148:SF1">
    <property type="entry name" value="ADENOSYLCOBINAMIDE-GDP RIBAZOLETRANSFERASE"/>
    <property type="match status" value="1"/>
</dbReference>
<dbReference type="Pfam" id="PF02654">
    <property type="entry name" value="CobS"/>
    <property type="match status" value="1"/>
</dbReference>
<sequence length="260" mass="26783">MKIKDYAVDTARAVAFLSRIPMPQSLFKGYDGRLGRLVRAFPFAGIVIGFIPALALLLLLGLRADPLMAALIALSIQVLVTGALHEDGLADTADGIGGGKSREQSLLIMKDSRIGTYGAIALILSLAIRAAALAVIARHSSPLTAALAIPAVAALSRGAIAWHWQRLAPAKADGVAASTGQPDEAAMQFALASAGLVAALLIWPAFGLRPLVASLLATGIAGFAFTAFIRRKLAGHTGDTLGATQQICEIATLCALATAL</sequence>
<gene>
    <name evidence="1" type="primary">cobS</name>
    <name type="ordered locus">RL2781.1</name>
    <name type="ORF">RL2781A</name>
</gene>